<evidence type="ECO:0000255" key="1">
    <source>
        <dbReference type="HAMAP-Rule" id="MF_00175"/>
    </source>
</evidence>
<evidence type="ECO:0000255" key="2">
    <source>
        <dbReference type="PROSITE-ProRule" id="PRU01250"/>
    </source>
</evidence>
<organism>
    <name type="scientific">Chlamydia felis (strain Fe/C-56)</name>
    <name type="common">Chlamydophila felis</name>
    <dbReference type="NCBI Taxonomy" id="264202"/>
    <lineage>
        <taxon>Bacteria</taxon>
        <taxon>Pseudomonadati</taxon>
        <taxon>Chlamydiota</taxon>
        <taxon>Chlamydiia</taxon>
        <taxon>Chlamydiales</taxon>
        <taxon>Chlamydiaceae</taxon>
        <taxon>Chlamydia/Chlamydophila group</taxon>
        <taxon>Chlamydia</taxon>
    </lineage>
</organism>
<protein>
    <recommendedName>
        <fullName evidence="1">ATP-dependent Clp protease ATP-binding subunit ClpX</fullName>
    </recommendedName>
</protein>
<feature type="chain" id="PRO_1000024539" description="ATP-dependent Clp protease ATP-binding subunit ClpX">
    <location>
        <begin position="1"/>
        <end position="421"/>
    </location>
</feature>
<feature type="domain" description="ClpX-type ZB" evidence="2">
    <location>
        <begin position="1"/>
        <end position="50"/>
    </location>
</feature>
<feature type="binding site" evidence="2">
    <location>
        <position position="9"/>
    </location>
    <ligand>
        <name>Zn(2+)</name>
        <dbReference type="ChEBI" id="CHEBI:29105"/>
    </ligand>
</feature>
<feature type="binding site" evidence="2">
    <location>
        <position position="12"/>
    </location>
    <ligand>
        <name>Zn(2+)</name>
        <dbReference type="ChEBI" id="CHEBI:29105"/>
    </ligand>
</feature>
<feature type="binding site" evidence="2">
    <location>
        <position position="31"/>
    </location>
    <ligand>
        <name>Zn(2+)</name>
        <dbReference type="ChEBI" id="CHEBI:29105"/>
    </ligand>
</feature>
<feature type="binding site" evidence="2">
    <location>
        <position position="34"/>
    </location>
    <ligand>
        <name>Zn(2+)</name>
        <dbReference type="ChEBI" id="CHEBI:29105"/>
    </ligand>
</feature>
<feature type="binding site" evidence="1">
    <location>
        <begin position="123"/>
        <end position="130"/>
    </location>
    <ligand>
        <name>ATP</name>
        <dbReference type="ChEBI" id="CHEBI:30616"/>
    </ligand>
</feature>
<sequence>MNKKNLTICSFCGRSEKDVEKLIAGPSVYICDYCIKLCSGILDKKPTSTPTSGASTEAAPQHPDLQVLTPKEIKKHIDQYVVGQERAKKTIAVAVYNHYKRIRALLNNKHVSYGKSNVLLLGPTGSGKTLIAKTLAKILDVPFTIADATTLTEAGYVGEDVENIVLRLLQAADYDVARAERGIIYIDEIDKIGRTTANVSITRDVSGEGVQQALLKIIEGTTANVPPKGGRKHPNQEYIRVNTENILFIVGGAFVNLDKIIAKRLGKTTIGFSDDLGDFSQKDRDHLLTKVETEDLIAFGMIPEFVGRFNCIVNCEELSLDELVAILTEPTNAIIKQYIELFSEENVKLIFEKEALYAIAKKAKLAKTGARALGMILENLLRDLMFEVPSDPTVEAIRIQEDTILENKAPVIIRRAPEAIA</sequence>
<accession>Q256C3</accession>
<reference key="1">
    <citation type="journal article" date="2006" name="DNA Res.">
        <title>Genome sequence of the cat pathogen, Chlamydophila felis.</title>
        <authorList>
            <person name="Azuma Y."/>
            <person name="Hirakawa H."/>
            <person name="Yamashita A."/>
            <person name="Cai Y."/>
            <person name="Rahman M.A."/>
            <person name="Suzuki H."/>
            <person name="Mitaku S."/>
            <person name="Toh H."/>
            <person name="Goto S."/>
            <person name="Murakami T."/>
            <person name="Sugi K."/>
            <person name="Hayashi H."/>
            <person name="Fukushi H."/>
            <person name="Hattori M."/>
            <person name="Kuhara S."/>
            <person name="Shirai M."/>
        </authorList>
    </citation>
    <scope>NUCLEOTIDE SEQUENCE [LARGE SCALE GENOMIC DNA]</scope>
    <source>
        <strain>Fe/C-56</strain>
    </source>
</reference>
<comment type="function">
    <text evidence="1">ATP-dependent specificity component of the Clp protease. It directs the protease to specific substrates. Can perform chaperone functions in the absence of ClpP.</text>
</comment>
<comment type="subunit">
    <text evidence="1">Component of the ClpX-ClpP complex. Forms a hexameric ring that, in the presence of ATP, binds to fourteen ClpP subunits assembled into a disk-like structure with a central cavity, resembling the structure of eukaryotic proteasomes.</text>
</comment>
<comment type="similarity">
    <text evidence="1">Belongs to the ClpX chaperone family.</text>
</comment>
<proteinExistence type="inferred from homology"/>
<name>CLPX_CHLFF</name>
<gene>
    <name evidence="1" type="primary">clpX</name>
    <name type="ordered locus">CF0093</name>
</gene>
<keyword id="KW-0067">ATP-binding</keyword>
<keyword id="KW-0143">Chaperone</keyword>
<keyword id="KW-0479">Metal-binding</keyword>
<keyword id="KW-0547">Nucleotide-binding</keyword>
<keyword id="KW-0862">Zinc</keyword>
<dbReference type="EMBL" id="AP006861">
    <property type="protein sequence ID" value="BAE80865.1"/>
    <property type="molecule type" value="Genomic_DNA"/>
</dbReference>
<dbReference type="RefSeq" id="WP_011457650.1">
    <property type="nucleotide sequence ID" value="NC_007899.1"/>
</dbReference>
<dbReference type="SMR" id="Q256C3"/>
<dbReference type="STRING" id="264202.CF0093"/>
<dbReference type="KEGG" id="cfe:CF0093"/>
<dbReference type="eggNOG" id="COG1219">
    <property type="taxonomic scope" value="Bacteria"/>
</dbReference>
<dbReference type="HOGENOM" id="CLU_014218_8_2_0"/>
<dbReference type="OrthoDB" id="9804062at2"/>
<dbReference type="Proteomes" id="UP000001260">
    <property type="component" value="Chromosome"/>
</dbReference>
<dbReference type="GO" id="GO:0009376">
    <property type="term" value="C:HslUV protease complex"/>
    <property type="evidence" value="ECO:0007669"/>
    <property type="project" value="TreeGrafter"/>
</dbReference>
<dbReference type="GO" id="GO:0005524">
    <property type="term" value="F:ATP binding"/>
    <property type="evidence" value="ECO:0007669"/>
    <property type="project" value="UniProtKB-UniRule"/>
</dbReference>
<dbReference type="GO" id="GO:0016887">
    <property type="term" value="F:ATP hydrolysis activity"/>
    <property type="evidence" value="ECO:0007669"/>
    <property type="project" value="InterPro"/>
</dbReference>
<dbReference type="GO" id="GO:0140662">
    <property type="term" value="F:ATP-dependent protein folding chaperone"/>
    <property type="evidence" value="ECO:0007669"/>
    <property type="project" value="InterPro"/>
</dbReference>
<dbReference type="GO" id="GO:0046983">
    <property type="term" value="F:protein dimerization activity"/>
    <property type="evidence" value="ECO:0007669"/>
    <property type="project" value="InterPro"/>
</dbReference>
<dbReference type="GO" id="GO:0051082">
    <property type="term" value="F:unfolded protein binding"/>
    <property type="evidence" value="ECO:0007669"/>
    <property type="project" value="UniProtKB-UniRule"/>
</dbReference>
<dbReference type="GO" id="GO:0008270">
    <property type="term" value="F:zinc ion binding"/>
    <property type="evidence" value="ECO:0007669"/>
    <property type="project" value="InterPro"/>
</dbReference>
<dbReference type="GO" id="GO:0051301">
    <property type="term" value="P:cell division"/>
    <property type="evidence" value="ECO:0007669"/>
    <property type="project" value="TreeGrafter"/>
</dbReference>
<dbReference type="GO" id="GO:0051603">
    <property type="term" value="P:proteolysis involved in protein catabolic process"/>
    <property type="evidence" value="ECO:0007669"/>
    <property type="project" value="TreeGrafter"/>
</dbReference>
<dbReference type="CDD" id="cd19497">
    <property type="entry name" value="RecA-like_ClpX"/>
    <property type="match status" value="1"/>
</dbReference>
<dbReference type="FunFam" id="1.10.8.60:FF:000002">
    <property type="entry name" value="ATP-dependent Clp protease ATP-binding subunit ClpX"/>
    <property type="match status" value="1"/>
</dbReference>
<dbReference type="FunFam" id="3.40.50.300:FF:000005">
    <property type="entry name" value="ATP-dependent Clp protease ATP-binding subunit ClpX"/>
    <property type="match status" value="1"/>
</dbReference>
<dbReference type="Gene3D" id="1.10.8.60">
    <property type="match status" value="1"/>
</dbReference>
<dbReference type="Gene3D" id="6.20.220.10">
    <property type="entry name" value="ClpX chaperone, C4-type zinc finger domain"/>
    <property type="match status" value="1"/>
</dbReference>
<dbReference type="Gene3D" id="3.40.50.300">
    <property type="entry name" value="P-loop containing nucleotide triphosphate hydrolases"/>
    <property type="match status" value="1"/>
</dbReference>
<dbReference type="HAMAP" id="MF_00175">
    <property type="entry name" value="ClpX"/>
    <property type="match status" value="1"/>
</dbReference>
<dbReference type="InterPro" id="IPR003593">
    <property type="entry name" value="AAA+_ATPase"/>
</dbReference>
<dbReference type="InterPro" id="IPR050052">
    <property type="entry name" value="ATP-dep_Clp_protease_ClpX"/>
</dbReference>
<dbReference type="InterPro" id="IPR003959">
    <property type="entry name" value="ATPase_AAA_core"/>
</dbReference>
<dbReference type="InterPro" id="IPR019489">
    <property type="entry name" value="Clp_ATPase_C"/>
</dbReference>
<dbReference type="InterPro" id="IPR004487">
    <property type="entry name" value="Clp_protease_ATP-bd_su_ClpX"/>
</dbReference>
<dbReference type="InterPro" id="IPR046425">
    <property type="entry name" value="ClpX_bact"/>
</dbReference>
<dbReference type="InterPro" id="IPR027417">
    <property type="entry name" value="P-loop_NTPase"/>
</dbReference>
<dbReference type="InterPro" id="IPR010603">
    <property type="entry name" value="Znf_CppX_C4"/>
</dbReference>
<dbReference type="InterPro" id="IPR038366">
    <property type="entry name" value="Znf_CppX_C4_sf"/>
</dbReference>
<dbReference type="NCBIfam" id="TIGR00382">
    <property type="entry name" value="clpX"/>
    <property type="match status" value="1"/>
</dbReference>
<dbReference type="NCBIfam" id="NF003745">
    <property type="entry name" value="PRK05342.1"/>
    <property type="match status" value="1"/>
</dbReference>
<dbReference type="PANTHER" id="PTHR48102:SF7">
    <property type="entry name" value="ATP-DEPENDENT CLP PROTEASE ATP-BINDING SUBUNIT CLPX-LIKE, MITOCHONDRIAL"/>
    <property type="match status" value="1"/>
</dbReference>
<dbReference type="PANTHER" id="PTHR48102">
    <property type="entry name" value="ATP-DEPENDENT CLP PROTEASE ATP-BINDING SUBUNIT CLPX-LIKE, MITOCHONDRIAL-RELATED"/>
    <property type="match status" value="1"/>
</dbReference>
<dbReference type="Pfam" id="PF07724">
    <property type="entry name" value="AAA_2"/>
    <property type="match status" value="1"/>
</dbReference>
<dbReference type="Pfam" id="PF10431">
    <property type="entry name" value="ClpB_D2-small"/>
    <property type="match status" value="1"/>
</dbReference>
<dbReference type="Pfam" id="PF06689">
    <property type="entry name" value="zf-C4_ClpX"/>
    <property type="match status" value="1"/>
</dbReference>
<dbReference type="SMART" id="SM00382">
    <property type="entry name" value="AAA"/>
    <property type="match status" value="1"/>
</dbReference>
<dbReference type="SMART" id="SM01086">
    <property type="entry name" value="ClpB_D2-small"/>
    <property type="match status" value="1"/>
</dbReference>
<dbReference type="SMART" id="SM00994">
    <property type="entry name" value="zf-C4_ClpX"/>
    <property type="match status" value="1"/>
</dbReference>
<dbReference type="SUPFAM" id="SSF57716">
    <property type="entry name" value="Glucocorticoid receptor-like (DNA-binding domain)"/>
    <property type="match status" value="1"/>
</dbReference>
<dbReference type="SUPFAM" id="SSF52540">
    <property type="entry name" value="P-loop containing nucleoside triphosphate hydrolases"/>
    <property type="match status" value="1"/>
</dbReference>
<dbReference type="PROSITE" id="PS51902">
    <property type="entry name" value="CLPX_ZB"/>
    <property type="match status" value="1"/>
</dbReference>